<gene>
    <name type="primary">MT-ND4L</name>
    <name type="synonym">MTND4L</name>
    <name type="synonym">NADH4L</name>
    <name type="synonym">ND4L</name>
</gene>
<comment type="function">
    <text evidence="1">Core subunit of the mitochondrial membrane respiratory chain NADH dehydrogenase (Complex I) which catalyzes electron transfer from NADH through the respiratory chain, using ubiquinone as an electron acceptor. Part of the enzyme membrane arm which is embedded in the lipid bilayer and involved in proton translocation.</text>
</comment>
<comment type="catalytic activity">
    <reaction evidence="1">
        <text>a ubiquinone + NADH + 5 H(+)(in) = a ubiquinol + NAD(+) + 4 H(+)(out)</text>
        <dbReference type="Rhea" id="RHEA:29091"/>
        <dbReference type="Rhea" id="RHEA-COMP:9565"/>
        <dbReference type="Rhea" id="RHEA-COMP:9566"/>
        <dbReference type="ChEBI" id="CHEBI:15378"/>
        <dbReference type="ChEBI" id="CHEBI:16389"/>
        <dbReference type="ChEBI" id="CHEBI:17976"/>
        <dbReference type="ChEBI" id="CHEBI:57540"/>
        <dbReference type="ChEBI" id="CHEBI:57945"/>
        <dbReference type="EC" id="7.1.1.2"/>
    </reaction>
    <physiologicalReaction direction="left-to-right" evidence="1">
        <dbReference type="Rhea" id="RHEA:29092"/>
    </physiologicalReaction>
</comment>
<comment type="subunit">
    <text evidence="2">Core subunit of respiratory chain NADH dehydrogenase (Complex I) which is composed of 45 different subunits.</text>
</comment>
<comment type="subcellular location">
    <subcellularLocation>
        <location evidence="2">Mitochondrion inner membrane</location>
        <topology evidence="3">Multi-pass membrane protein</topology>
    </subcellularLocation>
</comment>
<comment type="similarity">
    <text evidence="4">Belongs to the complex I subunit 4L family.</text>
</comment>
<accession>Q08GZ8</accession>
<dbReference type="EC" id="7.1.1.2"/>
<dbReference type="EMBL" id="AM181033">
    <property type="protein sequence ID" value="CAJ57100.1"/>
    <property type="molecule type" value="Genomic_DNA"/>
</dbReference>
<dbReference type="RefSeq" id="YP_778898.1">
    <property type="nucleotide sequence ID" value="NC_008431.1"/>
</dbReference>
<dbReference type="SMR" id="Q08GZ8"/>
<dbReference type="GeneID" id="4356513"/>
<dbReference type="CTD" id="4539"/>
<dbReference type="GO" id="GO:0005743">
    <property type="term" value="C:mitochondrial inner membrane"/>
    <property type="evidence" value="ECO:0000250"/>
    <property type="project" value="UniProtKB"/>
</dbReference>
<dbReference type="GO" id="GO:0045271">
    <property type="term" value="C:respiratory chain complex I"/>
    <property type="evidence" value="ECO:0000250"/>
    <property type="project" value="UniProtKB"/>
</dbReference>
<dbReference type="GO" id="GO:0008137">
    <property type="term" value="F:NADH dehydrogenase (ubiquinone) activity"/>
    <property type="evidence" value="ECO:0000250"/>
    <property type="project" value="UniProtKB"/>
</dbReference>
<dbReference type="GO" id="GO:0042773">
    <property type="term" value="P:ATP synthesis coupled electron transport"/>
    <property type="evidence" value="ECO:0007669"/>
    <property type="project" value="InterPro"/>
</dbReference>
<dbReference type="FunFam" id="1.10.287.3510:FF:000002">
    <property type="entry name" value="NADH-ubiquinone oxidoreductase chain 4L"/>
    <property type="match status" value="1"/>
</dbReference>
<dbReference type="Gene3D" id="1.10.287.3510">
    <property type="match status" value="1"/>
</dbReference>
<dbReference type="InterPro" id="IPR001133">
    <property type="entry name" value="NADH_UbQ_OxRdtase_chain4L/K"/>
</dbReference>
<dbReference type="InterPro" id="IPR039428">
    <property type="entry name" value="NUOK/Mnh_C1-like"/>
</dbReference>
<dbReference type="PANTHER" id="PTHR11434:SF0">
    <property type="entry name" value="NADH-UBIQUINONE OXIDOREDUCTASE CHAIN 4L"/>
    <property type="match status" value="1"/>
</dbReference>
<dbReference type="PANTHER" id="PTHR11434">
    <property type="entry name" value="NADH-UBIQUINONE OXIDOREDUCTASE SUBUNIT ND4L"/>
    <property type="match status" value="1"/>
</dbReference>
<dbReference type="Pfam" id="PF00420">
    <property type="entry name" value="Oxidored_q2"/>
    <property type="match status" value="1"/>
</dbReference>
<protein>
    <recommendedName>
        <fullName>NADH-ubiquinone oxidoreductase chain 4L</fullName>
        <ecNumber>7.1.1.2</ecNumber>
    </recommendedName>
    <alternativeName>
        <fullName>NADH dehydrogenase subunit 4L</fullName>
    </alternativeName>
</protein>
<organism>
    <name type="scientific">Pusa caspica</name>
    <name type="common">Caspian seal</name>
    <name type="synonym">Phoca caspica</name>
    <dbReference type="NCBI Taxonomy" id="693431"/>
    <lineage>
        <taxon>Eukaryota</taxon>
        <taxon>Metazoa</taxon>
        <taxon>Chordata</taxon>
        <taxon>Craniata</taxon>
        <taxon>Vertebrata</taxon>
        <taxon>Euteleostomi</taxon>
        <taxon>Mammalia</taxon>
        <taxon>Eutheria</taxon>
        <taxon>Laurasiatheria</taxon>
        <taxon>Carnivora</taxon>
        <taxon>Caniformia</taxon>
        <taxon>Pinnipedia</taxon>
        <taxon>Phocidae</taxon>
        <taxon>Phocinae</taxon>
        <taxon>Pusa</taxon>
    </lineage>
</organism>
<name>NU4LM_PUSCA</name>
<proteinExistence type="inferred from homology"/>
<keyword id="KW-0249">Electron transport</keyword>
<keyword id="KW-0472">Membrane</keyword>
<keyword id="KW-0496">Mitochondrion</keyword>
<keyword id="KW-0999">Mitochondrion inner membrane</keyword>
<keyword id="KW-0520">NAD</keyword>
<keyword id="KW-0679">Respiratory chain</keyword>
<keyword id="KW-1278">Translocase</keyword>
<keyword id="KW-0812">Transmembrane</keyword>
<keyword id="KW-1133">Transmembrane helix</keyword>
<keyword id="KW-0813">Transport</keyword>
<keyword id="KW-0830">Ubiquinone</keyword>
<feature type="chain" id="PRO_0000275091" description="NADH-ubiquinone oxidoreductase chain 4L">
    <location>
        <begin position="1"/>
        <end position="98"/>
    </location>
</feature>
<feature type="transmembrane region" description="Helical" evidence="3">
    <location>
        <begin position="1"/>
        <end position="21"/>
    </location>
</feature>
<feature type="transmembrane region" description="Helical" evidence="3">
    <location>
        <begin position="29"/>
        <end position="49"/>
    </location>
</feature>
<feature type="transmembrane region" description="Helical" evidence="3">
    <location>
        <begin position="61"/>
        <end position="81"/>
    </location>
</feature>
<reference key="1">
    <citation type="journal article" date="2006" name="Mol. Phylogenet. Evol.">
        <title>Pinniped phylogeny and a new hypothesis for their origin and dispersal.</title>
        <authorList>
            <person name="Arnason U."/>
            <person name="Gullberg A."/>
            <person name="Janke A."/>
            <person name="Kullberg M."/>
            <person name="Lehman N."/>
            <person name="Petrov E.A."/>
            <person name="Vainola R."/>
        </authorList>
    </citation>
    <scope>NUCLEOTIDE SEQUENCE [GENOMIC DNA]</scope>
</reference>
<evidence type="ECO:0000250" key="1">
    <source>
        <dbReference type="UniProtKB" id="P03901"/>
    </source>
</evidence>
<evidence type="ECO:0000250" key="2">
    <source>
        <dbReference type="UniProtKB" id="P03902"/>
    </source>
</evidence>
<evidence type="ECO:0000255" key="3"/>
<evidence type="ECO:0000305" key="4"/>
<geneLocation type="mitochondrion"/>
<sequence>MSMVYANIFLAFIMSLMGLLMYRSHLMSSLLCLEGMMLSLFVMMTATILNNHFTLASMAPIILLVFAACEAALGLSLLVTVSNTYGTDYVQNLNLLQC</sequence>